<name>CLPX_VIBC1</name>
<keyword id="KW-0067">ATP-binding</keyword>
<keyword id="KW-0143">Chaperone</keyword>
<keyword id="KW-0479">Metal-binding</keyword>
<keyword id="KW-0547">Nucleotide-binding</keyword>
<keyword id="KW-0862">Zinc</keyword>
<sequence>MTDKSKESGSGKLLYCSFCGKSQHEVRKLIAGPSVYICDECVDLCNDIIREEIKDVLPKKESEALPTPKQIREHLDDYVIGQDYAKKVLAVAVYNHYKRLRNGDTTSEGVELGKSNILLIGPTGSGKTLLAETLARFLDVPFTMADATTLTEAGYVGEDVENIIQKLLQKCDYDVAKAERGIVYIDEIDKISRKAENPSITRDVSGEGVQQALLKLIEGTVASVPPQGGRKHPQQEFLQVDTSKILFICGGAFAGLDKVIEQRVATGTGIGFGAEVRSKNETKTVGELFTQVEPEDLVKYGLIPEFIGRLPVTTTLTELDEEALIQILCEPKNALTKQYAALFELEDAELEFREDALRAIAKKAMERKTGARGLRSILESVLLETMYELPSATDVSKVVIDESVINGESEPLLIYSNADNQAAGAE</sequence>
<protein>
    <recommendedName>
        <fullName evidence="1">ATP-dependent Clp protease ATP-binding subunit ClpX</fullName>
    </recommendedName>
</protein>
<feature type="chain" id="PRO_1000024698" description="ATP-dependent Clp protease ATP-binding subunit ClpX">
    <location>
        <begin position="1"/>
        <end position="426"/>
    </location>
</feature>
<feature type="domain" description="ClpX-type ZB" evidence="2">
    <location>
        <begin position="4"/>
        <end position="57"/>
    </location>
</feature>
<feature type="binding site" evidence="2">
    <location>
        <position position="16"/>
    </location>
    <ligand>
        <name>Zn(2+)</name>
        <dbReference type="ChEBI" id="CHEBI:29105"/>
    </ligand>
</feature>
<feature type="binding site" evidence="2">
    <location>
        <position position="19"/>
    </location>
    <ligand>
        <name>Zn(2+)</name>
        <dbReference type="ChEBI" id="CHEBI:29105"/>
    </ligand>
</feature>
<feature type="binding site" evidence="2">
    <location>
        <position position="38"/>
    </location>
    <ligand>
        <name>Zn(2+)</name>
        <dbReference type="ChEBI" id="CHEBI:29105"/>
    </ligand>
</feature>
<feature type="binding site" evidence="2">
    <location>
        <position position="41"/>
    </location>
    <ligand>
        <name>Zn(2+)</name>
        <dbReference type="ChEBI" id="CHEBI:29105"/>
    </ligand>
</feature>
<feature type="binding site" evidence="1">
    <location>
        <begin position="122"/>
        <end position="129"/>
    </location>
    <ligand>
        <name>ATP</name>
        <dbReference type="ChEBI" id="CHEBI:30616"/>
    </ligand>
</feature>
<accession>A7MV82</accession>
<organism>
    <name type="scientific">Vibrio campbellii (strain ATCC BAA-1116)</name>
    <dbReference type="NCBI Taxonomy" id="2902295"/>
    <lineage>
        <taxon>Bacteria</taxon>
        <taxon>Pseudomonadati</taxon>
        <taxon>Pseudomonadota</taxon>
        <taxon>Gammaproteobacteria</taxon>
        <taxon>Vibrionales</taxon>
        <taxon>Vibrionaceae</taxon>
        <taxon>Vibrio</taxon>
    </lineage>
</organism>
<comment type="function">
    <text evidence="1">ATP-dependent specificity component of the Clp protease. It directs the protease to specific substrates. Can perform chaperone functions in the absence of ClpP.</text>
</comment>
<comment type="subunit">
    <text evidence="1">Component of the ClpX-ClpP complex. Forms a hexameric ring that, in the presence of ATP, binds to fourteen ClpP subunits assembled into a disk-like structure with a central cavity, resembling the structure of eukaryotic proteasomes.</text>
</comment>
<comment type="similarity">
    <text evidence="1">Belongs to the ClpX chaperone family.</text>
</comment>
<reference key="1">
    <citation type="submission" date="2007-08" db="EMBL/GenBank/DDBJ databases">
        <authorList>
            <consortium name="The Vibrio harveyi Genome Sequencing Project"/>
            <person name="Bassler B."/>
            <person name="Clifton S.W."/>
            <person name="Fulton L."/>
            <person name="Delehaunty K."/>
            <person name="Fronick C."/>
            <person name="Harrison M."/>
            <person name="Markivic C."/>
            <person name="Fulton R."/>
            <person name="Tin-Wollam A.-M."/>
            <person name="Shah N."/>
            <person name="Pepin K."/>
            <person name="Nash W."/>
            <person name="Thiruvilangam P."/>
            <person name="Bhonagiri V."/>
            <person name="Waters C."/>
            <person name="Tu K.C."/>
            <person name="Irgon J."/>
            <person name="Wilson R.K."/>
        </authorList>
    </citation>
    <scope>NUCLEOTIDE SEQUENCE [LARGE SCALE GENOMIC DNA]</scope>
    <source>
        <strain>ATCC BAA-1116 / BB120</strain>
    </source>
</reference>
<proteinExistence type="inferred from homology"/>
<dbReference type="EMBL" id="CP000789">
    <property type="protein sequence ID" value="ABU70393.1"/>
    <property type="molecule type" value="Genomic_DNA"/>
</dbReference>
<dbReference type="RefSeq" id="WP_005430932.1">
    <property type="nucleotide sequence ID" value="NC_022269.1"/>
</dbReference>
<dbReference type="SMR" id="A7MV82"/>
<dbReference type="GeneID" id="83582468"/>
<dbReference type="KEGG" id="vha:VIBHAR_01418"/>
<dbReference type="PATRIC" id="fig|338187.25.peg.1235"/>
<dbReference type="Proteomes" id="UP000008152">
    <property type="component" value="Chromosome I"/>
</dbReference>
<dbReference type="GO" id="GO:0009376">
    <property type="term" value="C:HslUV protease complex"/>
    <property type="evidence" value="ECO:0007669"/>
    <property type="project" value="TreeGrafter"/>
</dbReference>
<dbReference type="GO" id="GO:0005524">
    <property type="term" value="F:ATP binding"/>
    <property type="evidence" value="ECO:0007669"/>
    <property type="project" value="UniProtKB-UniRule"/>
</dbReference>
<dbReference type="GO" id="GO:0016887">
    <property type="term" value="F:ATP hydrolysis activity"/>
    <property type="evidence" value="ECO:0007669"/>
    <property type="project" value="InterPro"/>
</dbReference>
<dbReference type="GO" id="GO:0140662">
    <property type="term" value="F:ATP-dependent protein folding chaperone"/>
    <property type="evidence" value="ECO:0007669"/>
    <property type="project" value="InterPro"/>
</dbReference>
<dbReference type="GO" id="GO:0046983">
    <property type="term" value="F:protein dimerization activity"/>
    <property type="evidence" value="ECO:0007669"/>
    <property type="project" value="InterPro"/>
</dbReference>
<dbReference type="GO" id="GO:0051082">
    <property type="term" value="F:unfolded protein binding"/>
    <property type="evidence" value="ECO:0007669"/>
    <property type="project" value="UniProtKB-UniRule"/>
</dbReference>
<dbReference type="GO" id="GO:0008270">
    <property type="term" value="F:zinc ion binding"/>
    <property type="evidence" value="ECO:0007669"/>
    <property type="project" value="InterPro"/>
</dbReference>
<dbReference type="GO" id="GO:0051301">
    <property type="term" value="P:cell division"/>
    <property type="evidence" value="ECO:0007669"/>
    <property type="project" value="TreeGrafter"/>
</dbReference>
<dbReference type="GO" id="GO:0051603">
    <property type="term" value="P:proteolysis involved in protein catabolic process"/>
    <property type="evidence" value="ECO:0007669"/>
    <property type="project" value="TreeGrafter"/>
</dbReference>
<dbReference type="CDD" id="cd19497">
    <property type="entry name" value="RecA-like_ClpX"/>
    <property type="match status" value="1"/>
</dbReference>
<dbReference type="FunFam" id="1.10.8.60:FF:000002">
    <property type="entry name" value="ATP-dependent Clp protease ATP-binding subunit ClpX"/>
    <property type="match status" value="1"/>
</dbReference>
<dbReference type="FunFam" id="3.40.50.300:FF:000005">
    <property type="entry name" value="ATP-dependent Clp protease ATP-binding subunit ClpX"/>
    <property type="match status" value="1"/>
</dbReference>
<dbReference type="Gene3D" id="1.10.8.60">
    <property type="match status" value="1"/>
</dbReference>
<dbReference type="Gene3D" id="6.20.220.10">
    <property type="entry name" value="ClpX chaperone, C4-type zinc finger domain"/>
    <property type="match status" value="1"/>
</dbReference>
<dbReference type="Gene3D" id="3.40.50.300">
    <property type="entry name" value="P-loop containing nucleotide triphosphate hydrolases"/>
    <property type="match status" value="1"/>
</dbReference>
<dbReference type="HAMAP" id="MF_00175">
    <property type="entry name" value="ClpX"/>
    <property type="match status" value="1"/>
</dbReference>
<dbReference type="InterPro" id="IPR003593">
    <property type="entry name" value="AAA+_ATPase"/>
</dbReference>
<dbReference type="InterPro" id="IPR050052">
    <property type="entry name" value="ATP-dep_Clp_protease_ClpX"/>
</dbReference>
<dbReference type="InterPro" id="IPR003959">
    <property type="entry name" value="ATPase_AAA_core"/>
</dbReference>
<dbReference type="InterPro" id="IPR019489">
    <property type="entry name" value="Clp_ATPase_C"/>
</dbReference>
<dbReference type="InterPro" id="IPR004487">
    <property type="entry name" value="Clp_protease_ATP-bd_su_ClpX"/>
</dbReference>
<dbReference type="InterPro" id="IPR046425">
    <property type="entry name" value="ClpX_bact"/>
</dbReference>
<dbReference type="InterPro" id="IPR027417">
    <property type="entry name" value="P-loop_NTPase"/>
</dbReference>
<dbReference type="InterPro" id="IPR010603">
    <property type="entry name" value="Znf_CppX_C4"/>
</dbReference>
<dbReference type="InterPro" id="IPR038366">
    <property type="entry name" value="Znf_CppX_C4_sf"/>
</dbReference>
<dbReference type="NCBIfam" id="TIGR00382">
    <property type="entry name" value="clpX"/>
    <property type="match status" value="1"/>
</dbReference>
<dbReference type="NCBIfam" id="NF003745">
    <property type="entry name" value="PRK05342.1"/>
    <property type="match status" value="1"/>
</dbReference>
<dbReference type="PANTHER" id="PTHR48102:SF7">
    <property type="entry name" value="ATP-DEPENDENT CLP PROTEASE ATP-BINDING SUBUNIT CLPX-LIKE, MITOCHONDRIAL"/>
    <property type="match status" value="1"/>
</dbReference>
<dbReference type="PANTHER" id="PTHR48102">
    <property type="entry name" value="ATP-DEPENDENT CLP PROTEASE ATP-BINDING SUBUNIT CLPX-LIKE, MITOCHONDRIAL-RELATED"/>
    <property type="match status" value="1"/>
</dbReference>
<dbReference type="Pfam" id="PF07724">
    <property type="entry name" value="AAA_2"/>
    <property type="match status" value="1"/>
</dbReference>
<dbReference type="Pfam" id="PF10431">
    <property type="entry name" value="ClpB_D2-small"/>
    <property type="match status" value="1"/>
</dbReference>
<dbReference type="Pfam" id="PF06689">
    <property type="entry name" value="zf-C4_ClpX"/>
    <property type="match status" value="1"/>
</dbReference>
<dbReference type="SMART" id="SM00382">
    <property type="entry name" value="AAA"/>
    <property type="match status" value="1"/>
</dbReference>
<dbReference type="SMART" id="SM01086">
    <property type="entry name" value="ClpB_D2-small"/>
    <property type="match status" value="1"/>
</dbReference>
<dbReference type="SMART" id="SM00994">
    <property type="entry name" value="zf-C4_ClpX"/>
    <property type="match status" value="1"/>
</dbReference>
<dbReference type="SUPFAM" id="SSF57716">
    <property type="entry name" value="Glucocorticoid receptor-like (DNA-binding domain)"/>
    <property type="match status" value="1"/>
</dbReference>
<dbReference type="SUPFAM" id="SSF52540">
    <property type="entry name" value="P-loop containing nucleoside triphosphate hydrolases"/>
    <property type="match status" value="1"/>
</dbReference>
<dbReference type="PROSITE" id="PS51902">
    <property type="entry name" value="CLPX_ZB"/>
    <property type="match status" value="1"/>
</dbReference>
<gene>
    <name evidence="1" type="primary">clpX</name>
    <name type="ordered locus">VIBHAR_01418</name>
</gene>
<evidence type="ECO:0000255" key="1">
    <source>
        <dbReference type="HAMAP-Rule" id="MF_00175"/>
    </source>
</evidence>
<evidence type="ECO:0000255" key="2">
    <source>
        <dbReference type="PROSITE-ProRule" id="PRU01250"/>
    </source>
</evidence>